<organism>
    <name type="scientific">Human herpesvirus 1 (strain SC16)</name>
    <name type="common">HHV-1</name>
    <name type="synonym">Human herpes simplex virus 1</name>
    <dbReference type="NCBI Taxonomy" id="10309"/>
    <lineage>
        <taxon>Viruses</taxon>
        <taxon>Duplodnaviria</taxon>
        <taxon>Heunggongvirae</taxon>
        <taxon>Peploviricota</taxon>
        <taxon>Herviviricetes</taxon>
        <taxon>Herpesvirales</taxon>
        <taxon>Orthoherpesviridae</taxon>
        <taxon>Alphaherpesvirinae</taxon>
        <taxon>Simplexvirus</taxon>
        <taxon>Simplexvirus humanalpha1</taxon>
        <taxon>Human herpesvirus 1</taxon>
    </lineage>
</organism>
<comment type="function">
    <text evidence="1">Catalyzes the transfer of the gamma-phospho group of ATP to thymidine to generate dTMP in the salvage pathway of pyrimidine synthesis. The dTMP serves as a substrate for DNA polymerase during viral DNA replication. Allows the virus to be reactivated and to grow in non-proliferative cells lacking a high concentration of phosphorylated nucleic acid precursors.</text>
</comment>
<comment type="catalytic activity">
    <reaction evidence="1">
        <text>thymidine + ATP = dTMP + ADP + H(+)</text>
        <dbReference type="Rhea" id="RHEA:19129"/>
        <dbReference type="ChEBI" id="CHEBI:15378"/>
        <dbReference type="ChEBI" id="CHEBI:17748"/>
        <dbReference type="ChEBI" id="CHEBI:30616"/>
        <dbReference type="ChEBI" id="CHEBI:63528"/>
        <dbReference type="ChEBI" id="CHEBI:456216"/>
        <dbReference type="EC" id="2.7.1.21"/>
    </reaction>
</comment>
<comment type="subunit">
    <text evidence="1">Homodimer.</text>
</comment>
<comment type="biotechnology">
    <text>Used in molecular biology as a selectable marker to identify transfected eukaryotic cells. Used in cancer suicide gene therapy to selectively kill transformed cells.</text>
</comment>
<comment type="miscellaneous">
    <text>Phosphorylates and thereby activates certain drugs like acyclovir (ACV), valacyclovir, and famciclovir to a toxic form, that leads to successful suppression of the infection, while the uninfected cell does not have this ability because it lacks TK. Mutations in thymidine kinase may induce HSV resistance to antiviral therapies in immunocompromised patients. The most frequently observed resistant strains are unable to express TK and are avirulent in animal models of disease. Resistance may be acquired less frequently by selecting variants which no longer recognize ACV or ACV triphosphate as substrates but which retain normal functions.</text>
</comment>
<comment type="similarity">
    <text evidence="1">Belongs to the herpesviridae thymidine kinase family.</text>
</comment>
<name>KITH_HHV1S</name>
<reference key="1">
    <citation type="journal article" date="1986" name="J. Gen. Virol.">
        <title>Evidence that the 'active centre' of the herpes simplex virus thymidine kinase involves an interaction between three distinct regions of the polypeptide.</title>
        <authorList>
            <person name="Darby G."/>
            <person name="Larder B.A."/>
            <person name="Inglis M.M."/>
        </authorList>
    </citation>
    <scope>NUCLEOTIDE SEQUENCE [GENOMIC DNA]</scope>
</reference>
<gene>
    <name evidence="1" type="primary">TK</name>
    <name type="ordered locus">UL23</name>
</gene>
<accession>P06479</accession>
<proteinExistence type="evidence at protein level"/>
<organismHost>
    <name type="scientific">Homo sapiens</name>
    <name type="common">Human</name>
    <dbReference type="NCBI Taxonomy" id="9606"/>
</organismHost>
<feature type="chain" id="PRO_0000175073" description="Thymidine kinase">
    <location>
        <begin position="1"/>
        <end position="376"/>
    </location>
</feature>
<feature type="region of interest" description="Disordered" evidence="2">
    <location>
        <begin position="1"/>
        <end position="44"/>
    </location>
</feature>
<feature type="region of interest" description="Disordered" evidence="2">
    <location>
        <begin position="260"/>
        <end position="280"/>
    </location>
</feature>
<feature type="compositionally biased region" description="Basic residues" evidence="2">
    <location>
        <begin position="19"/>
        <end position="32"/>
    </location>
</feature>
<feature type="compositionally biased region" description="Basic and acidic residues" evidence="2">
    <location>
        <begin position="33"/>
        <end position="44"/>
    </location>
</feature>
<feature type="active site" description="Proton acceptor" evidence="1">
    <location>
        <position position="83"/>
    </location>
</feature>
<feature type="binding site" evidence="1">
    <location>
        <begin position="56"/>
        <end position="63"/>
    </location>
    <ligand>
        <name>ATP</name>
        <dbReference type="ChEBI" id="CHEBI:30616"/>
    </ligand>
</feature>
<feature type="binding site" evidence="1">
    <location>
        <position position="101"/>
    </location>
    <ligand>
        <name>substrate</name>
    </ligand>
</feature>
<feature type="binding site" evidence="1">
    <location>
        <position position="125"/>
    </location>
    <ligand>
        <name>substrate</name>
    </ligand>
</feature>
<feature type="binding site" evidence="1">
    <location>
        <position position="216"/>
    </location>
    <ligand>
        <name>ATP</name>
        <dbReference type="ChEBI" id="CHEBI:30616"/>
    </ligand>
</feature>
<feature type="binding site" evidence="1">
    <location>
        <position position="222"/>
    </location>
    <ligand>
        <name>substrate</name>
    </ligand>
</feature>
<keyword id="KW-0067">ATP-binding</keyword>
<keyword id="KW-0237">DNA synthesis</keyword>
<keyword id="KW-0244">Early protein</keyword>
<keyword id="KW-0418">Kinase</keyword>
<keyword id="KW-0547">Nucleotide-binding</keyword>
<keyword id="KW-0808">Transferase</keyword>
<sequence>MASYPGHQHASAFDQAARSRGHSNRRTALRPRRQQEATEVRPEQKMPTLLRVYIDGPHGMGKTTTTQLLVALGSRDDIVYVPEPMTYWRVLGASETIANIYTTQHRLDQGEISAGDAAVVMTSAQITMGMPYAVTDAVLAPHIGGEAGSSHAPPPALTLIFDRHPIAALLCYPAARYLMGSMTPQAVLAFVALIPPTLPGTNIVLGALPEDRHIDRLAKRQRPGERLDLAMLAAIRRVYGLLANTVRYLQGGGSWREDWGQLSGTAVPPQGAEPQSNAGPRPHIGDTLFTLFRAPELLAPNGDLYNVFAWALDVLAKRLRPMHVFILDYDQSPAGCRDALLQLTSGMIQTHVTTPGSIPTICDLARTFAREMGEAN</sequence>
<protein>
    <recommendedName>
        <fullName evidence="1">Thymidine kinase</fullName>
        <ecNumber evidence="1">2.7.1.21</ecNumber>
    </recommendedName>
</protein>
<dbReference type="EC" id="2.7.1.21" evidence="1"/>
<dbReference type="EMBL" id="X03764">
    <property type="protein sequence ID" value="CAA27395.1"/>
    <property type="molecule type" value="Genomic_DNA"/>
</dbReference>
<dbReference type="PIR" id="A27240">
    <property type="entry name" value="KIBE16"/>
</dbReference>
<dbReference type="SMR" id="P06479"/>
<dbReference type="BindingDB" id="P06479"/>
<dbReference type="ChEMBL" id="CHEMBL1820"/>
<dbReference type="DrugCentral" id="P06479"/>
<dbReference type="GO" id="GO:0005524">
    <property type="term" value="F:ATP binding"/>
    <property type="evidence" value="ECO:0007669"/>
    <property type="project" value="UniProtKB-KW"/>
</dbReference>
<dbReference type="GO" id="GO:0004797">
    <property type="term" value="F:thymidine kinase activity"/>
    <property type="evidence" value="ECO:0007669"/>
    <property type="project" value="UniProtKB-EC"/>
</dbReference>
<dbReference type="GO" id="GO:0071897">
    <property type="term" value="P:DNA biosynthetic process"/>
    <property type="evidence" value="ECO:0007669"/>
    <property type="project" value="UniProtKB-KW"/>
</dbReference>
<dbReference type="GO" id="GO:0006230">
    <property type="term" value="P:TMP biosynthetic process"/>
    <property type="evidence" value="ECO:0007669"/>
    <property type="project" value="InterPro"/>
</dbReference>
<dbReference type="Gene3D" id="3.40.50.300">
    <property type="entry name" value="P-loop containing nucleotide triphosphate hydrolases"/>
    <property type="match status" value="1"/>
</dbReference>
<dbReference type="HAMAP" id="MF_04029">
    <property type="entry name" value="HSV_KITH"/>
    <property type="match status" value="1"/>
</dbReference>
<dbReference type="InterPro" id="IPR001889">
    <property type="entry name" value="Herpes_TK"/>
</dbReference>
<dbReference type="InterPro" id="IPR027417">
    <property type="entry name" value="P-loop_NTPase"/>
</dbReference>
<dbReference type="Pfam" id="PF00693">
    <property type="entry name" value="Herpes_TK"/>
    <property type="match status" value="1"/>
</dbReference>
<dbReference type="SUPFAM" id="SSF52540">
    <property type="entry name" value="P-loop containing nucleoside triphosphate hydrolases"/>
    <property type="match status" value="1"/>
</dbReference>
<evidence type="ECO:0000255" key="1">
    <source>
        <dbReference type="HAMAP-Rule" id="MF_04029"/>
    </source>
</evidence>
<evidence type="ECO:0000256" key="2">
    <source>
        <dbReference type="SAM" id="MobiDB-lite"/>
    </source>
</evidence>